<sequence>MLFFPWWVYLCIVGIIFSAYKLVAAAKEEEKVDQAFIEKEGQIYMERMEKERERRSSQQHEEENQNHSIA</sequence>
<comment type="function">
    <text evidence="3">Required for efficient sporulation.</text>
</comment>
<comment type="subcellular location">
    <subcellularLocation>
        <location evidence="4">Cell membrane</location>
        <topology evidence="4">Single-pass membrane protein</topology>
    </subcellularLocation>
</comment>
<comment type="induction">
    <text evidence="3">Expression controlled by a sigma-E-regulated promoter which needs the sigma-E factor for the binding of the RNA polymerase and subsequent transcription.</text>
</comment>
<name>YHAL_BACSU</name>
<organism>
    <name type="scientific">Bacillus subtilis (strain 168)</name>
    <dbReference type="NCBI Taxonomy" id="224308"/>
    <lineage>
        <taxon>Bacteria</taxon>
        <taxon>Bacillati</taxon>
        <taxon>Bacillota</taxon>
        <taxon>Bacilli</taxon>
        <taxon>Bacillales</taxon>
        <taxon>Bacillaceae</taxon>
        <taxon>Bacillus</taxon>
    </lineage>
</organism>
<protein>
    <recommendedName>
        <fullName>Sporulation protein YhaL</fullName>
    </recommendedName>
</protein>
<evidence type="ECO:0000255" key="1"/>
<evidence type="ECO:0000256" key="2">
    <source>
        <dbReference type="SAM" id="MobiDB-lite"/>
    </source>
</evidence>
<evidence type="ECO:0000269" key="3">
    <source>
    </source>
</evidence>
<evidence type="ECO:0000305" key="4"/>
<accession>O07520</accession>
<accession>Q796V1</accession>
<feature type="chain" id="PRO_0000360155" description="Sporulation protein YhaL">
    <location>
        <begin position="1"/>
        <end position="70"/>
    </location>
</feature>
<feature type="transmembrane region" description="Helical" evidence="1">
    <location>
        <begin position="3"/>
        <end position="23"/>
    </location>
</feature>
<feature type="region of interest" description="Disordered" evidence="2">
    <location>
        <begin position="48"/>
        <end position="70"/>
    </location>
</feature>
<dbReference type="EMBL" id="Y14078">
    <property type="protein sequence ID" value="CAA74419.1"/>
    <property type="molecule type" value="Genomic_DNA"/>
</dbReference>
<dbReference type="EMBL" id="AL009126">
    <property type="protein sequence ID" value="CAB12834.1"/>
    <property type="molecule type" value="Genomic_DNA"/>
</dbReference>
<dbReference type="PIR" id="F69818">
    <property type="entry name" value="F69818"/>
</dbReference>
<dbReference type="RefSeq" id="NP_388875.1">
    <property type="nucleotide sequence ID" value="NC_000964.3"/>
</dbReference>
<dbReference type="RefSeq" id="WP_003233252.1">
    <property type="nucleotide sequence ID" value="NZ_OZ025638.1"/>
</dbReference>
<dbReference type="SMR" id="O07520"/>
<dbReference type="FunCoup" id="O07520">
    <property type="interactions" value="13"/>
</dbReference>
<dbReference type="IntAct" id="O07520">
    <property type="interactions" value="1"/>
</dbReference>
<dbReference type="STRING" id="224308.BSU09940"/>
<dbReference type="PaxDb" id="224308-BSU09940"/>
<dbReference type="DNASU" id="936285"/>
<dbReference type="EnsemblBacteria" id="CAB12834">
    <property type="protein sequence ID" value="CAB12834"/>
    <property type="gene ID" value="BSU_09940"/>
</dbReference>
<dbReference type="GeneID" id="86874531"/>
<dbReference type="GeneID" id="936285"/>
<dbReference type="KEGG" id="bsu:BSU09940"/>
<dbReference type="PATRIC" id="fig|224308.179.peg.1067"/>
<dbReference type="eggNOG" id="ENOG50336J9">
    <property type="taxonomic scope" value="Bacteria"/>
</dbReference>
<dbReference type="InParanoid" id="O07520"/>
<dbReference type="OrthoDB" id="2454520at2"/>
<dbReference type="BioCyc" id="BSUB:BSU09940-MONOMER"/>
<dbReference type="Proteomes" id="UP000001570">
    <property type="component" value="Chromosome"/>
</dbReference>
<dbReference type="GO" id="GO:0005886">
    <property type="term" value="C:plasma membrane"/>
    <property type="evidence" value="ECO:0007669"/>
    <property type="project" value="UniProtKB-SubCell"/>
</dbReference>
<dbReference type="GO" id="GO:0030435">
    <property type="term" value="P:sporulation resulting in formation of a cellular spore"/>
    <property type="evidence" value="ECO:0007669"/>
    <property type="project" value="UniProtKB-KW"/>
</dbReference>
<dbReference type="InterPro" id="IPR025428">
    <property type="entry name" value="Spore_YhaL"/>
</dbReference>
<dbReference type="Pfam" id="PF14147">
    <property type="entry name" value="Spore_YhaL"/>
    <property type="match status" value="1"/>
</dbReference>
<keyword id="KW-1003">Cell membrane</keyword>
<keyword id="KW-0472">Membrane</keyword>
<keyword id="KW-1185">Reference proteome</keyword>
<keyword id="KW-0749">Sporulation</keyword>
<keyword id="KW-0812">Transmembrane</keyword>
<keyword id="KW-1133">Transmembrane helix</keyword>
<reference key="1">
    <citation type="submission" date="1997-06" db="EMBL/GenBank/DDBJ databases">
        <authorList>
            <person name="Noback M.A."/>
            <person name="Terpstra P."/>
            <person name="Holsappel S."/>
            <person name="Venema G."/>
            <person name="Bron S."/>
        </authorList>
    </citation>
    <scope>NUCLEOTIDE SEQUENCE [GENOMIC DNA]</scope>
    <source>
        <strain>168</strain>
    </source>
</reference>
<reference key="2">
    <citation type="journal article" date="1997" name="Nature">
        <title>The complete genome sequence of the Gram-positive bacterium Bacillus subtilis.</title>
        <authorList>
            <person name="Kunst F."/>
            <person name="Ogasawara N."/>
            <person name="Moszer I."/>
            <person name="Albertini A.M."/>
            <person name="Alloni G."/>
            <person name="Azevedo V."/>
            <person name="Bertero M.G."/>
            <person name="Bessieres P."/>
            <person name="Bolotin A."/>
            <person name="Borchert S."/>
            <person name="Borriss R."/>
            <person name="Boursier L."/>
            <person name="Brans A."/>
            <person name="Braun M."/>
            <person name="Brignell S.C."/>
            <person name="Bron S."/>
            <person name="Brouillet S."/>
            <person name="Bruschi C.V."/>
            <person name="Caldwell B."/>
            <person name="Capuano V."/>
            <person name="Carter N.M."/>
            <person name="Choi S.-K."/>
            <person name="Codani J.-J."/>
            <person name="Connerton I.F."/>
            <person name="Cummings N.J."/>
            <person name="Daniel R.A."/>
            <person name="Denizot F."/>
            <person name="Devine K.M."/>
            <person name="Duesterhoeft A."/>
            <person name="Ehrlich S.D."/>
            <person name="Emmerson P.T."/>
            <person name="Entian K.-D."/>
            <person name="Errington J."/>
            <person name="Fabret C."/>
            <person name="Ferrari E."/>
            <person name="Foulger D."/>
            <person name="Fritz C."/>
            <person name="Fujita M."/>
            <person name="Fujita Y."/>
            <person name="Fuma S."/>
            <person name="Galizzi A."/>
            <person name="Galleron N."/>
            <person name="Ghim S.-Y."/>
            <person name="Glaser P."/>
            <person name="Goffeau A."/>
            <person name="Golightly E.J."/>
            <person name="Grandi G."/>
            <person name="Guiseppi G."/>
            <person name="Guy B.J."/>
            <person name="Haga K."/>
            <person name="Haiech J."/>
            <person name="Harwood C.R."/>
            <person name="Henaut A."/>
            <person name="Hilbert H."/>
            <person name="Holsappel S."/>
            <person name="Hosono S."/>
            <person name="Hullo M.-F."/>
            <person name="Itaya M."/>
            <person name="Jones L.-M."/>
            <person name="Joris B."/>
            <person name="Karamata D."/>
            <person name="Kasahara Y."/>
            <person name="Klaerr-Blanchard M."/>
            <person name="Klein C."/>
            <person name="Kobayashi Y."/>
            <person name="Koetter P."/>
            <person name="Koningstein G."/>
            <person name="Krogh S."/>
            <person name="Kumano M."/>
            <person name="Kurita K."/>
            <person name="Lapidus A."/>
            <person name="Lardinois S."/>
            <person name="Lauber J."/>
            <person name="Lazarevic V."/>
            <person name="Lee S.-M."/>
            <person name="Levine A."/>
            <person name="Liu H."/>
            <person name="Masuda S."/>
            <person name="Mauel C."/>
            <person name="Medigue C."/>
            <person name="Medina N."/>
            <person name="Mellado R.P."/>
            <person name="Mizuno M."/>
            <person name="Moestl D."/>
            <person name="Nakai S."/>
            <person name="Noback M."/>
            <person name="Noone D."/>
            <person name="O'Reilly M."/>
            <person name="Ogawa K."/>
            <person name="Ogiwara A."/>
            <person name="Oudega B."/>
            <person name="Park S.-H."/>
            <person name="Parro V."/>
            <person name="Pohl T.M."/>
            <person name="Portetelle D."/>
            <person name="Porwollik S."/>
            <person name="Prescott A.M."/>
            <person name="Presecan E."/>
            <person name="Pujic P."/>
            <person name="Purnelle B."/>
            <person name="Rapoport G."/>
            <person name="Rey M."/>
            <person name="Reynolds S."/>
            <person name="Rieger M."/>
            <person name="Rivolta C."/>
            <person name="Rocha E."/>
            <person name="Roche B."/>
            <person name="Rose M."/>
            <person name="Sadaie Y."/>
            <person name="Sato T."/>
            <person name="Scanlan E."/>
            <person name="Schleich S."/>
            <person name="Schroeter R."/>
            <person name="Scoffone F."/>
            <person name="Sekiguchi J."/>
            <person name="Sekowska A."/>
            <person name="Seror S.J."/>
            <person name="Serror P."/>
            <person name="Shin B.-S."/>
            <person name="Soldo B."/>
            <person name="Sorokin A."/>
            <person name="Tacconi E."/>
            <person name="Takagi T."/>
            <person name="Takahashi H."/>
            <person name="Takemaru K."/>
            <person name="Takeuchi M."/>
            <person name="Tamakoshi A."/>
            <person name="Tanaka T."/>
            <person name="Terpstra P."/>
            <person name="Tognoni A."/>
            <person name="Tosato V."/>
            <person name="Uchiyama S."/>
            <person name="Vandenbol M."/>
            <person name="Vannier F."/>
            <person name="Vassarotti A."/>
            <person name="Viari A."/>
            <person name="Wambutt R."/>
            <person name="Wedler E."/>
            <person name="Wedler H."/>
            <person name="Weitzenegger T."/>
            <person name="Winters P."/>
            <person name="Wipat A."/>
            <person name="Yamamoto H."/>
            <person name="Yamane K."/>
            <person name="Yasumoto K."/>
            <person name="Yata K."/>
            <person name="Yoshida K."/>
            <person name="Yoshikawa H.-F."/>
            <person name="Zumstein E."/>
            <person name="Yoshikawa H."/>
            <person name="Danchin A."/>
        </authorList>
    </citation>
    <scope>NUCLEOTIDE SEQUENCE [LARGE SCALE GENOMIC DNA]</scope>
    <source>
        <strain>168</strain>
    </source>
</reference>
<reference key="3">
    <citation type="journal article" date="2003" name="Microbiology">
        <title>Identification of sporulation genes by genome-wide analysis of the sigmaE regulon of Bacillus subtilis.</title>
        <authorList>
            <person name="Feucht A."/>
            <person name="Evans L."/>
            <person name="Errington J."/>
        </authorList>
    </citation>
    <scope>INDUCTION</scope>
    <scope>FUNCTION IN SPORULATION</scope>
</reference>
<gene>
    <name type="primary">yhaL</name>
    <name type="ordered locus">BSU09940</name>
</gene>
<proteinExistence type="evidence at protein level"/>